<dbReference type="EMBL" id="AF292939">
    <property type="protein sequence ID" value="AAG34027.1"/>
    <property type="molecule type" value="mRNA"/>
</dbReference>
<dbReference type="EMBL" id="BC052936">
    <property type="protein sequence ID" value="AAH52936.1"/>
    <property type="molecule type" value="mRNA"/>
</dbReference>
<dbReference type="EMBL" id="AK078492">
    <property type="protein sequence ID" value="BAC37306.1"/>
    <property type="molecule type" value="mRNA"/>
</dbReference>
<dbReference type="CCDS" id="CCDS17234.1"/>
<dbReference type="RefSeq" id="NP_573481.1">
    <property type="nucleotide sequence ID" value="NM_133218.2"/>
</dbReference>
<dbReference type="SMR" id="Q9ERQ3"/>
<dbReference type="BioGRID" id="228416">
    <property type="interactions" value="2"/>
</dbReference>
<dbReference type="FunCoup" id="Q9ERQ3">
    <property type="interactions" value="1696"/>
</dbReference>
<dbReference type="STRING" id="10090.ENSMUSP00000041242"/>
<dbReference type="GlyGen" id="Q9ERQ3">
    <property type="glycosylation" value="6 sites, 1 O-linked glycan (4 sites)"/>
</dbReference>
<dbReference type="iPTMnet" id="Q9ERQ3"/>
<dbReference type="PhosphoSitePlus" id="Q9ERQ3"/>
<dbReference type="PaxDb" id="10090-ENSMUSP00000041242"/>
<dbReference type="ProteomicsDB" id="275031"/>
<dbReference type="Antibodypedia" id="12438">
    <property type="antibodies" value="58 antibodies from 13 providers"/>
</dbReference>
<dbReference type="DNASU" id="170753"/>
<dbReference type="Ensembl" id="ENSMUST00000041124.13">
    <property type="protein sequence ID" value="ENSMUSP00000041242.8"/>
    <property type="gene ID" value="ENSMUSG00000040209.13"/>
</dbReference>
<dbReference type="GeneID" id="170753"/>
<dbReference type="KEGG" id="mmu:170753"/>
<dbReference type="UCSC" id="uc012cng.1">
    <property type="organism name" value="mouse"/>
</dbReference>
<dbReference type="AGR" id="MGI:2180715"/>
<dbReference type="CTD" id="170753"/>
<dbReference type="MGI" id="MGI:2180715">
    <property type="gene designation" value="Zfp704"/>
</dbReference>
<dbReference type="VEuPathDB" id="HostDB:ENSMUSG00000040209"/>
<dbReference type="eggNOG" id="ENOG502QW7P">
    <property type="taxonomic scope" value="Eukaryota"/>
</dbReference>
<dbReference type="GeneTree" id="ENSGT00940000156172"/>
<dbReference type="InParanoid" id="Q9ERQ3"/>
<dbReference type="OMA" id="QKVEGSC"/>
<dbReference type="OrthoDB" id="5950721at2759"/>
<dbReference type="PhylomeDB" id="Q9ERQ3"/>
<dbReference type="TreeFam" id="TF326610"/>
<dbReference type="Reactome" id="R-MMU-212436">
    <property type="pathway name" value="Generic Transcription Pathway"/>
</dbReference>
<dbReference type="BioGRID-ORCS" id="170753">
    <property type="hits" value="3 hits in 76 CRISPR screens"/>
</dbReference>
<dbReference type="ChiTaRS" id="Zfp704">
    <property type="organism name" value="mouse"/>
</dbReference>
<dbReference type="PRO" id="PR:Q9ERQ3"/>
<dbReference type="Proteomes" id="UP000000589">
    <property type="component" value="Chromosome 3"/>
</dbReference>
<dbReference type="RNAct" id="Q9ERQ3">
    <property type="molecule type" value="protein"/>
</dbReference>
<dbReference type="Bgee" id="ENSMUSG00000040209">
    <property type="expression patterns" value="Expressed in rostral migratory stream and 243 other cell types or tissues"/>
</dbReference>
<dbReference type="ExpressionAtlas" id="Q9ERQ3">
    <property type="expression patterns" value="baseline and differential"/>
</dbReference>
<dbReference type="GO" id="GO:0005634">
    <property type="term" value="C:nucleus"/>
    <property type="evidence" value="ECO:0000314"/>
    <property type="project" value="MGI"/>
</dbReference>
<dbReference type="GO" id="GO:0000987">
    <property type="term" value="F:cis-regulatory region sequence-specific DNA binding"/>
    <property type="evidence" value="ECO:0000314"/>
    <property type="project" value="MGI"/>
</dbReference>
<dbReference type="GO" id="GO:0008270">
    <property type="term" value="F:zinc ion binding"/>
    <property type="evidence" value="ECO:0007669"/>
    <property type="project" value="UniProtKB-KW"/>
</dbReference>
<dbReference type="GO" id="GO:0006357">
    <property type="term" value="P:regulation of transcription by RNA polymerase II"/>
    <property type="evidence" value="ECO:0000314"/>
    <property type="project" value="MGI"/>
</dbReference>
<dbReference type="InterPro" id="IPR052253">
    <property type="entry name" value="CR1/CR2-DNA-binding_regulator"/>
</dbReference>
<dbReference type="InterPro" id="IPR013087">
    <property type="entry name" value="Znf_C2H2_type"/>
</dbReference>
<dbReference type="PANTHER" id="PTHR13006">
    <property type="entry name" value="PAPILLOMAVIRUS REGULATORY FACTOR PRF-1"/>
    <property type="match status" value="1"/>
</dbReference>
<dbReference type="PANTHER" id="PTHR13006:SF7">
    <property type="entry name" value="ZINC FINGER PROTEIN 704"/>
    <property type="match status" value="1"/>
</dbReference>
<dbReference type="SMART" id="SM01366">
    <property type="entry name" value="c-clamp"/>
    <property type="match status" value="1"/>
</dbReference>
<dbReference type="PROSITE" id="PS00028">
    <property type="entry name" value="ZINC_FINGER_C2H2_1"/>
    <property type="match status" value="1"/>
</dbReference>
<dbReference type="PROSITE" id="PS50157">
    <property type="entry name" value="ZINC_FINGER_C2H2_2"/>
    <property type="match status" value="1"/>
</dbReference>
<keyword id="KW-0238">DNA-binding</keyword>
<keyword id="KW-0479">Metal-binding</keyword>
<keyword id="KW-0539">Nucleus</keyword>
<keyword id="KW-0597">Phosphoprotein</keyword>
<keyword id="KW-1185">Reference proteome</keyword>
<keyword id="KW-0804">Transcription</keyword>
<keyword id="KW-0805">Transcription regulation</keyword>
<keyword id="KW-0862">Zinc</keyword>
<keyword id="KW-0863">Zinc-finger</keyword>
<organism>
    <name type="scientific">Mus musculus</name>
    <name type="common">Mouse</name>
    <dbReference type="NCBI Taxonomy" id="10090"/>
    <lineage>
        <taxon>Eukaryota</taxon>
        <taxon>Metazoa</taxon>
        <taxon>Chordata</taxon>
        <taxon>Craniata</taxon>
        <taxon>Vertebrata</taxon>
        <taxon>Euteleostomi</taxon>
        <taxon>Mammalia</taxon>
        <taxon>Eutheria</taxon>
        <taxon>Euarchontoglires</taxon>
        <taxon>Glires</taxon>
        <taxon>Rodentia</taxon>
        <taxon>Myomorpha</taxon>
        <taxon>Muroidea</taxon>
        <taxon>Muridae</taxon>
        <taxon>Murinae</taxon>
        <taxon>Mus</taxon>
        <taxon>Mus</taxon>
    </lineage>
</organism>
<reference key="1">
    <citation type="journal article" date="2007" name="Mech. Dev.">
        <title>Cloning and characterization of a novel MyoD enhancer-binding factor.</title>
        <authorList>
            <person name="Yamamoto M."/>
            <person name="Watt C.D."/>
            <person name="Schmidt R.J."/>
            <person name="Kuscuoglu U."/>
            <person name="Miesfeld R.L."/>
            <person name="Goldhamer D.J."/>
        </authorList>
    </citation>
    <scope>NUCLEOTIDE SEQUENCE [MRNA]</scope>
    <scope>FUNCTION</scope>
    <scope>SUBCELLULAR LOCATION</scope>
    <scope>DEVELOPMENTAL STAGE</scope>
    <scope>DISRUPTION PHENOTYPE</scope>
    <scope>MOTIF</scope>
    <scope>MUTAGENESIS OF 537-LYS--LYS-541 AND 555-CYS--LYS-559</scope>
    <source>
        <strain>BALB/cJ</strain>
    </source>
</reference>
<reference key="2">
    <citation type="journal article" date="2004" name="Genome Res.">
        <title>The status, quality, and expansion of the NIH full-length cDNA project: the Mammalian Gene Collection (MGC).</title>
        <authorList>
            <consortium name="The MGC Project Team"/>
        </authorList>
    </citation>
    <scope>NUCLEOTIDE SEQUENCE [LARGE SCALE MRNA] OF 301-566</scope>
    <source>
        <tissue>Pancreas</tissue>
    </source>
</reference>
<reference key="3">
    <citation type="journal article" date="2005" name="Science">
        <title>The transcriptional landscape of the mammalian genome.</title>
        <authorList>
            <person name="Carninci P."/>
            <person name="Kasukawa T."/>
            <person name="Katayama S."/>
            <person name="Gough J."/>
            <person name="Frith M.C."/>
            <person name="Maeda N."/>
            <person name="Oyama R."/>
            <person name="Ravasi T."/>
            <person name="Lenhard B."/>
            <person name="Wells C."/>
            <person name="Kodzius R."/>
            <person name="Shimokawa K."/>
            <person name="Bajic V.B."/>
            <person name="Brenner S.E."/>
            <person name="Batalov S."/>
            <person name="Forrest A.R."/>
            <person name="Zavolan M."/>
            <person name="Davis M.J."/>
            <person name="Wilming L.G."/>
            <person name="Aidinis V."/>
            <person name="Allen J.E."/>
            <person name="Ambesi-Impiombato A."/>
            <person name="Apweiler R."/>
            <person name="Aturaliya R.N."/>
            <person name="Bailey T.L."/>
            <person name="Bansal M."/>
            <person name="Baxter L."/>
            <person name="Beisel K.W."/>
            <person name="Bersano T."/>
            <person name="Bono H."/>
            <person name="Chalk A.M."/>
            <person name="Chiu K.P."/>
            <person name="Choudhary V."/>
            <person name="Christoffels A."/>
            <person name="Clutterbuck D.R."/>
            <person name="Crowe M.L."/>
            <person name="Dalla E."/>
            <person name="Dalrymple B.P."/>
            <person name="de Bono B."/>
            <person name="Della Gatta G."/>
            <person name="di Bernardo D."/>
            <person name="Down T."/>
            <person name="Engstrom P."/>
            <person name="Fagiolini M."/>
            <person name="Faulkner G."/>
            <person name="Fletcher C.F."/>
            <person name="Fukushima T."/>
            <person name="Furuno M."/>
            <person name="Futaki S."/>
            <person name="Gariboldi M."/>
            <person name="Georgii-Hemming P."/>
            <person name="Gingeras T.R."/>
            <person name="Gojobori T."/>
            <person name="Green R.E."/>
            <person name="Gustincich S."/>
            <person name="Harbers M."/>
            <person name="Hayashi Y."/>
            <person name="Hensch T.K."/>
            <person name="Hirokawa N."/>
            <person name="Hill D."/>
            <person name="Huminiecki L."/>
            <person name="Iacono M."/>
            <person name="Ikeo K."/>
            <person name="Iwama A."/>
            <person name="Ishikawa T."/>
            <person name="Jakt M."/>
            <person name="Kanapin A."/>
            <person name="Katoh M."/>
            <person name="Kawasawa Y."/>
            <person name="Kelso J."/>
            <person name="Kitamura H."/>
            <person name="Kitano H."/>
            <person name="Kollias G."/>
            <person name="Krishnan S.P."/>
            <person name="Kruger A."/>
            <person name="Kummerfeld S.K."/>
            <person name="Kurochkin I.V."/>
            <person name="Lareau L.F."/>
            <person name="Lazarevic D."/>
            <person name="Lipovich L."/>
            <person name="Liu J."/>
            <person name="Liuni S."/>
            <person name="McWilliam S."/>
            <person name="Madan Babu M."/>
            <person name="Madera M."/>
            <person name="Marchionni L."/>
            <person name="Matsuda H."/>
            <person name="Matsuzawa S."/>
            <person name="Miki H."/>
            <person name="Mignone F."/>
            <person name="Miyake S."/>
            <person name="Morris K."/>
            <person name="Mottagui-Tabar S."/>
            <person name="Mulder N."/>
            <person name="Nakano N."/>
            <person name="Nakauchi H."/>
            <person name="Ng P."/>
            <person name="Nilsson R."/>
            <person name="Nishiguchi S."/>
            <person name="Nishikawa S."/>
            <person name="Nori F."/>
            <person name="Ohara O."/>
            <person name="Okazaki Y."/>
            <person name="Orlando V."/>
            <person name="Pang K.C."/>
            <person name="Pavan W.J."/>
            <person name="Pavesi G."/>
            <person name="Pesole G."/>
            <person name="Petrovsky N."/>
            <person name="Piazza S."/>
            <person name="Reed J."/>
            <person name="Reid J.F."/>
            <person name="Ring B.Z."/>
            <person name="Ringwald M."/>
            <person name="Rost B."/>
            <person name="Ruan Y."/>
            <person name="Salzberg S.L."/>
            <person name="Sandelin A."/>
            <person name="Schneider C."/>
            <person name="Schoenbach C."/>
            <person name="Sekiguchi K."/>
            <person name="Semple C.A."/>
            <person name="Seno S."/>
            <person name="Sessa L."/>
            <person name="Sheng Y."/>
            <person name="Shibata Y."/>
            <person name="Shimada H."/>
            <person name="Shimada K."/>
            <person name="Silva D."/>
            <person name="Sinclair B."/>
            <person name="Sperling S."/>
            <person name="Stupka E."/>
            <person name="Sugiura K."/>
            <person name="Sultana R."/>
            <person name="Takenaka Y."/>
            <person name="Taki K."/>
            <person name="Tammoja K."/>
            <person name="Tan S.L."/>
            <person name="Tang S."/>
            <person name="Taylor M.S."/>
            <person name="Tegner J."/>
            <person name="Teichmann S.A."/>
            <person name="Ueda H.R."/>
            <person name="van Nimwegen E."/>
            <person name="Verardo R."/>
            <person name="Wei C.L."/>
            <person name="Yagi K."/>
            <person name="Yamanishi H."/>
            <person name="Zabarovsky E."/>
            <person name="Zhu S."/>
            <person name="Zimmer A."/>
            <person name="Hide W."/>
            <person name="Bult C."/>
            <person name="Grimmond S.M."/>
            <person name="Teasdale R.D."/>
            <person name="Liu E.T."/>
            <person name="Brusic V."/>
            <person name="Quackenbush J."/>
            <person name="Wahlestedt C."/>
            <person name="Mattick J.S."/>
            <person name="Hume D.A."/>
            <person name="Kai C."/>
            <person name="Sasaki D."/>
            <person name="Tomaru Y."/>
            <person name="Fukuda S."/>
            <person name="Kanamori-Katayama M."/>
            <person name="Suzuki M."/>
            <person name="Aoki J."/>
            <person name="Arakawa T."/>
            <person name="Iida J."/>
            <person name="Imamura K."/>
            <person name="Itoh M."/>
            <person name="Kato T."/>
            <person name="Kawaji H."/>
            <person name="Kawagashira N."/>
            <person name="Kawashima T."/>
            <person name="Kojima M."/>
            <person name="Kondo S."/>
            <person name="Konno H."/>
            <person name="Nakano K."/>
            <person name="Ninomiya N."/>
            <person name="Nishio T."/>
            <person name="Okada M."/>
            <person name="Plessy C."/>
            <person name="Shibata K."/>
            <person name="Shiraki T."/>
            <person name="Suzuki S."/>
            <person name="Tagami M."/>
            <person name="Waki K."/>
            <person name="Watahiki A."/>
            <person name="Okamura-Oho Y."/>
            <person name="Suzuki H."/>
            <person name="Kawai J."/>
            <person name="Hayashizaki Y."/>
        </authorList>
    </citation>
    <scope>NUCLEOTIDE SEQUENCE [LARGE SCALE MRNA] OF 363-566</scope>
    <source>
        <strain>C57BL/6J</strain>
        <tissue>Muellerian duct</tissue>
    </source>
</reference>
<reference key="4">
    <citation type="journal article" date="2010" name="Cell">
        <title>A tissue-specific atlas of mouse protein phosphorylation and expression.</title>
        <authorList>
            <person name="Huttlin E.L."/>
            <person name="Jedrychowski M.P."/>
            <person name="Elias J.E."/>
            <person name="Goswami T."/>
            <person name="Rad R."/>
            <person name="Beausoleil S.A."/>
            <person name="Villen J."/>
            <person name="Haas W."/>
            <person name="Sowa M.E."/>
            <person name="Gygi S.P."/>
        </authorList>
    </citation>
    <scope>PHOSPHORYLATION [LARGE SCALE ANALYSIS] AT SER-378 AND SER-381</scope>
    <scope>IDENTIFICATION BY MASS SPECTROMETRY [LARGE SCALE ANALYSIS]</scope>
    <source>
        <tissue>Brain</tissue>
        <tissue>Kidney</tissue>
        <tissue>Lung</tissue>
    </source>
</reference>
<name>ZN704_MOUSE</name>
<gene>
    <name evidence="1" type="primary">Znf704</name>
    <name evidence="5" type="synonym">Gig1</name>
    <name evidence="6" type="synonym">Zfp704</name>
</gene>
<accession>Q9ERQ3</accession>
<accession>Q7TQL8</accession>
<accession>Q8BJW9</accession>
<sequence length="566" mass="61150">MQARRLAKRPSLGSRRGGAAPAPAPEAAALGLPPPGPSPAAAPGSWRPPLPPPRGTGPSRAAAASSPVLLLLGEEDEDEEGAGRRRRTRGRVTEKPRGVAEEEDDDEEEDEEVVVEVVDGDEDDEDAEERFVPLGPGRALPKGPARGAVKVGSFKREMTFTFQSEDFRRDSSKKPSHHLFPLAMEEDVRTADTKKTSRVLDQEKETRSVCLLEQKRKVVSSNIDVPPARKSSEELDMDKVTAAMVLTSLSTSPLVRSPPVRPNEGLSGSWKEGAPSSSSSSGYWSWSAPSDQSNPSTPSPPLSADSFKPFRSPAPPDDGIDEADASNLLFDEPIPRKRKNSMKVMFKCLWKSCGKVLNTAAGIQKHIRAVHLGRVGESDCSDGEEDFYYTEIKLNTDATAEGLNTVAPVSPSQSLASAPAFPIPDSSRTETPCAKTDTKLVTPLSRSAPTTLYLVHTDHAYQATPPVTIPGSAKFTPNGSSFSISWQSPPVTFTGVPVSPPHHPTAGSGEQRQHAHTALSSPPRGTVTLRKPRGEGKKCRKVYGMENRDMWCTACRWKKACQRFID</sequence>
<comment type="function">
    <text evidence="4">Transcription factor which binds to RE2 sequence elements in the MYOD1 enhancer.</text>
</comment>
<comment type="subcellular location">
    <subcellularLocation>
        <location evidence="4">Nucleus</location>
    </subcellularLocation>
</comment>
<comment type="developmental stage">
    <text evidence="4">Expressed from embryonic stage 9.5 dpc to 14.5 dpc. Detected in tissues from all three germ layers, with particularly strong expression in mesodermal derivatives. Strongly expressed in somites and also detected in limb bud mesenchyme, apical epidermal ridge (AER), otic vesicle, and nephrogenic mesenchyme. Expression in somites follows an anterior-to-posterior gradient of activation and localizes to somite myotomes. In limbs, first detected at stage 10.5 dpc, probably in a subset of muscle precursor cells. Expression in developing muscles continues during stage 14.5 dpc. Found in a subset of tendon precursors, particularly in the distal region of the limb. Also detected in ectoderm at the digit tips. Other notable sites of expression at stage 11.5 dpc include skin epithelium in the posterior embryo, thyroid rudiment, ventral neural tube, roof plate, floor plate, dorsal aorta, sympathetic chain ganglia, endolymphatic duct, otic vesicle epithelium and vascular wall.</text>
</comment>
<comment type="domain">
    <text evidence="4">The CR1 and CR2 motifs mediate sequence-specific DNA binding, and are important for binding to the MYOD1 enhancer.</text>
</comment>
<comment type="disruption phenotype">
    <text evidence="4">No visible phenotype.</text>
</comment>
<protein>
    <recommendedName>
        <fullName evidence="6">Zinc finger protein 704</fullName>
    </recommendedName>
    <alternativeName>
        <fullName evidence="5">Glucocorticoid-induced gene 1 protein</fullName>
    </alternativeName>
</protein>
<feature type="chain" id="PRO_0000288825" description="Zinc finger protein 704">
    <location>
        <begin position="1"/>
        <end position="566"/>
    </location>
</feature>
<feature type="zinc finger region" description="C2H2-type" evidence="2">
    <location>
        <begin position="346"/>
        <end position="371"/>
    </location>
</feature>
<feature type="region of interest" description="Disordered" evidence="3">
    <location>
        <begin position="1"/>
        <end position="148"/>
    </location>
</feature>
<feature type="region of interest" description="Disordered" evidence="3">
    <location>
        <begin position="166"/>
        <end position="203"/>
    </location>
</feature>
<feature type="region of interest" description="Disordered" evidence="3">
    <location>
        <begin position="253"/>
        <end position="324"/>
    </location>
</feature>
<feature type="region of interest" description="Disordered" evidence="3">
    <location>
        <begin position="409"/>
        <end position="436"/>
    </location>
</feature>
<feature type="region of interest" description="Sufficient for binding to RE2 sequence motifs" evidence="4">
    <location>
        <begin position="471"/>
        <end position="566"/>
    </location>
</feature>
<feature type="region of interest" description="Disordered" evidence="3">
    <location>
        <begin position="497"/>
        <end position="535"/>
    </location>
</feature>
<feature type="short sequence motif" description="CR1" evidence="4">
    <location>
        <begin position="537"/>
        <end position="541"/>
    </location>
</feature>
<feature type="short sequence motif" description="CR2" evidence="4">
    <location>
        <begin position="555"/>
        <end position="559"/>
    </location>
</feature>
<feature type="compositionally biased region" description="Low complexity" evidence="3">
    <location>
        <begin position="12"/>
        <end position="31"/>
    </location>
</feature>
<feature type="compositionally biased region" description="Pro residues" evidence="3">
    <location>
        <begin position="32"/>
        <end position="55"/>
    </location>
</feature>
<feature type="compositionally biased region" description="Low complexity" evidence="3">
    <location>
        <begin position="56"/>
        <end position="72"/>
    </location>
</feature>
<feature type="compositionally biased region" description="Basic and acidic residues" evidence="3">
    <location>
        <begin position="91"/>
        <end position="100"/>
    </location>
</feature>
<feature type="compositionally biased region" description="Acidic residues" evidence="3">
    <location>
        <begin position="101"/>
        <end position="128"/>
    </location>
</feature>
<feature type="compositionally biased region" description="Basic and acidic residues" evidence="3">
    <location>
        <begin position="186"/>
        <end position="203"/>
    </location>
</feature>
<feature type="compositionally biased region" description="Low complexity" evidence="3">
    <location>
        <begin position="267"/>
        <end position="290"/>
    </location>
</feature>
<feature type="modified residue" description="Phosphoserine" evidence="7">
    <location>
        <position position="378"/>
    </location>
</feature>
<feature type="modified residue" description="Phosphoserine" evidence="7">
    <location>
        <position position="381"/>
    </location>
</feature>
<feature type="mutagenesis site" description="Fails to bind to RE2 sequence motifs." evidence="4">
    <original>KKCRK</original>
    <variation>VALAL</variation>
    <location>
        <begin position="537"/>
        <end position="541"/>
    </location>
</feature>
<feature type="mutagenesis site" description="Fails to bind to RE2 sequence motifs." evidence="4">
    <original>CRWKK</original>
    <variation>VALAL</variation>
    <location>
        <begin position="555"/>
        <end position="559"/>
    </location>
</feature>
<proteinExistence type="evidence at protein level"/>
<evidence type="ECO:0000250" key="1">
    <source>
        <dbReference type="UniProtKB" id="Q6ZNC4"/>
    </source>
</evidence>
<evidence type="ECO:0000255" key="2">
    <source>
        <dbReference type="PROSITE-ProRule" id="PRU00042"/>
    </source>
</evidence>
<evidence type="ECO:0000256" key="3">
    <source>
        <dbReference type="SAM" id="MobiDB-lite"/>
    </source>
</evidence>
<evidence type="ECO:0000269" key="4">
    <source>
    </source>
</evidence>
<evidence type="ECO:0000303" key="5">
    <source>
    </source>
</evidence>
<evidence type="ECO:0000312" key="6">
    <source>
        <dbReference type="MGI" id="MGI:2180715"/>
    </source>
</evidence>
<evidence type="ECO:0007744" key="7">
    <source>
    </source>
</evidence>